<sequence length="99" mass="11240">MFAIIKTGGRQLKVEKDQTIFVEKIDKNEGETITFTDILFINGKIGTPYVENASVTGIIEKQGKAKKIVVYRHNPKSTHKRKLGHRQLFTKVKITELKG</sequence>
<evidence type="ECO:0000255" key="1">
    <source>
        <dbReference type="HAMAP-Rule" id="MF_01363"/>
    </source>
</evidence>
<evidence type="ECO:0000305" key="2"/>
<gene>
    <name evidence="1" type="primary">rplU</name>
    <name type="ordered locus">MHJ_0127</name>
</gene>
<keyword id="KW-0687">Ribonucleoprotein</keyword>
<keyword id="KW-0689">Ribosomal protein</keyword>
<keyword id="KW-0694">RNA-binding</keyword>
<keyword id="KW-0699">rRNA-binding</keyword>
<accession>Q4AAK2</accession>
<protein>
    <recommendedName>
        <fullName evidence="1">Large ribosomal subunit protein bL21</fullName>
    </recommendedName>
    <alternativeName>
        <fullName evidence="2">50S ribosomal protein L21</fullName>
    </alternativeName>
</protein>
<organism>
    <name type="scientific">Mesomycoplasma hyopneumoniae (strain J / ATCC 25934 / NCTC 10110)</name>
    <name type="common">Mycoplasma hyopneumoniae</name>
    <dbReference type="NCBI Taxonomy" id="262719"/>
    <lineage>
        <taxon>Bacteria</taxon>
        <taxon>Bacillati</taxon>
        <taxon>Mycoplasmatota</taxon>
        <taxon>Mycoplasmoidales</taxon>
        <taxon>Metamycoplasmataceae</taxon>
        <taxon>Mesomycoplasma</taxon>
    </lineage>
</organism>
<feature type="chain" id="PRO_0000270691" description="Large ribosomal subunit protein bL21">
    <location>
        <begin position="1"/>
        <end position="99"/>
    </location>
</feature>
<proteinExistence type="inferred from homology"/>
<name>RL21_MESHJ</name>
<dbReference type="EMBL" id="AE017243">
    <property type="protein sequence ID" value="AAZ44219.1"/>
    <property type="molecule type" value="Genomic_DNA"/>
</dbReference>
<dbReference type="RefSeq" id="WP_011283930.1">
    <property type="nucleotide sequence ID" value="NC_007295.1"/>
</dbReference>
<dbReference type="SMR" id="Q4AAK2"/>
<dbReference type="GeneID" id="41334429"/>
<dbReference type="KEGG" id="mhj:MHJ_0127"/>
<dbReference type="eggNOG" id="COG0261">
    <property type="taxonomic scope" value="Bacteria"/>
</dbReference>
<dbReference type="HOGENOM" id="CLU_061463_3_1_14"/>
<dbReference type="OrthoDB" id="9813334at2"/>
<dbReference type="Proteomes" id="UP000000548">
    <property type="component" value="Chromosome"/>
</dbReference>
<dbReference type="GO" id="GO:0005737">
    <property type="term" value="C:cytoplasm"/>
    <property type="evidence" value="ECO:0007669"/>
    <property type="project" value="UniProtKB-ARBA"/>
</dbReference>
<dbReference type="GO" id="GO:1990904">
    <property type="term" value="C:ribonucleoprotein complex"/>
    <property type="evidence" value="ECO:0007669"/>
    <property type="project" value="UniProtKB-KW"/>
</dbReference>
<dbReference type="GO" id="GO:0005840">
    <property type="term" value="C:ribosome"/>
    <property type="evidence" value="ECO:0007669"/>
    <property type="project" value="UniProtKB-KW"/>
</dbReference>
<dbReference type="GO" id="GO:0019843">
    <property type="term" value="F:rRNA binding"/>
    <property type="evidence" value="ECO:0007669"/>
    <property type="project" value="UniProtKB-UniRule"/>
</dbReference>
<dbReference type="GO" id="GO:0003735">
    <property type="term" value="F:structural constituent of ribosome"/>
    <property type="evidence" value="ECO:0007669"/>
    <property type="project" value="InterPro"/>
</dbReference>
<dbReference type="GO" id="GO:0006412">
    <property type="term" value="P:translation"/>
    <property type="evidence" value="ECO:0007669"/>
    <property type="project" value="UniProtKB-UniRule"/>
</dbReference>
<dbReference type="HAMAP" id="MF_01363">
    <property type="entry name" value="Ribosomal_bL21"/>
    <property type="match status" value="1"/>
</dbReference>
<dbReference type="InterPro" id="IPR028909">
    <property type="entry name" value="bL21-like"/>
</dbReference>
<dbReference type="InterPro" id="IPR036164">
    <property type="entry name" value="bL21-like_sf"/>
</dbReference>
<dbReference type="InterPro" id="IPR001787">
    <property type="entry name" value="Ribosomal_bL21"/>
</dbReference>
<dbReference type="NCBIfam" id="TIGR00061">
    <property type="entry name" value="L21"/>
    <property type="match status" value="1"/>
</dbReference>
<dbReference type="PANTHER" id="PTHR21349">
    <property type="entry name" value="50S RIBOSOMAL PROTEIN L21"/>
    <property type="match status" value="1"/>
</dbReference>
<dbReference type="PANTHER" id="PTHR21349:SF0">
    <property type="entry name" value="LARGE RIBOSOMAL SUBUNIT PROTEIN BL21M"/>
    <property type="match status" value="1"/>
</dbReference>
<dbReference type="Pfam" id="PF00829">
    <property type="entry name" value="Ribosomal_L21p"/>
    <property type="match status" value="1"/>
</dbReference>
<dbReference type="SUPFAM" id="SSF141091">
    <property type="entry name" value="L21p-like"/>
    <property type="match status" value="1"/>
</dbReference>
<reference key="1">
    <citation type="journal article" date="2005" name="J. Bacteriol.">
        <title>Swine and poultry pathogens: the complete genome sequences of two strains of Mycoplasma hyopneumoniae and a strain of Mycoplasma synoviae.</title>
        <authorList>
            <person name="Vasconcelos A.T.R."/>
            <person name="Ferreira H.B."/>
            <person name="Bizarro C.V."/>
            <person name="Bonatto S.L."/>
            <person name="Carvalho M.O."/>
            <person name="Pinto P.M."/>
            <person name="Almeida D.F."/>
            <person name="Almeida L.G.P."/>
            <person name="Almeida R."/>
            <person name="Alves-Junior L."/>
            <person name="Assuncao E.N."/>
            <person name="Azevedo V.A.C."/>
            <person name="Bogo M.R."/>
            <person name="Brigido M.M."/>
            <person name="Brocchi M."/>
            <person name="Burity H.A."/>
            <person name="Camargo A.A."/>
            <person name="Camargo S.S."/>
            <person name="Carepo M.S."/>
            <person name="Carraro D.M."/>
            <person name="de Mattos Cascardo J.C."/>
            <person name="Castro L.A."/>
            <person name="Cavalcanti G."/>
            <person name="Chemale G."/>
            <person name="Collevatti R.G."/>
            <person name="Cunha C.W."/>
            <person name="Dallagiovanna B."/>
            <person name="Dambros B.P."/>
            <person name="Dellagostin O.A."/>
            <person name="Falcao C."/>
            <person name="Fantinatti-Garboggini F."/>
            <person name="Felipe M.S.S."/>
            <person name="Fiorentin L."/>
            <person name="Franco G.R."/>
            <person name="Freitas N.S.A."/>
            <person name="Frias D."/>
            <person name="Grangeiro T.B."/>
            <person name="Grisard E.C."/>
            <person name="Guimaraes C.T."/>
            <person name="Hungria M."/>
            <person name="Jardim S.N."/>
            <person name="Krieger M.A."/>
            <person name="Laurino J.P."/>
            <person name="Lima L.F.A."/>
            <person name="Lopes M.I."/>
            <person name="Loreto E.L.S."/>
            <person name="Madeira H.M.F."/>
            <person name="Manfio G.P."/>
            <person name="Maranhao A.Q."/>
            <person name="Martinkovics C.T."/>
            <person name="Medeiros S.R.B."/>
            <person name="Moreira M.A.M."/>
            <person name="Neiva M."/>
            <person name="Ramalho-Neto C.E."/>
            <person name="Nicolas M.F."/>
            <person name="Oliveira S.C."/>
            <person name="Paixao R.F.C."/>
            <person name="Pedrosa F.O."/>
            <person name="Pena S.D.J."/>
            <person name="Pereira M."/>
            <person name="Pereira-Ferrari L."/>
            <person name="Piffer I."/>
            <person name="Pinto L.S."/>
            <person name="Potrich D.P."/>
            <person name="Salim A.C.M."/>
            <person name="Santos F.R."/>
            <person name="Schmitt R."/>
            <person name="Schneider M.P.C."/>
            <person name="Schrank A."/>
            <person name="Schrank I.S."/>
            <person name="Schuck A.F."/>
            <person name="Seuanez H.N."/>
            <person name="Silva D.W."/>
            <person name="Silva R."/>
            <person name="Silva S.C."/>
            <person name="Soares C.M.A."/>
            <person name="Souza K.R.L."/>
            <person name="Souza R.C."/>
            <person name="Staats C.C."/>
            <person name="Steffens M.B.R."/>
            <person name="Teixeira S.M.R."/>
            <person name="Urmenyi T.P."/>
            <person name="Vainstein M.H."/>
            <person name="Zuccherato L.W."/>
            <person name="Simpson A.J.G."/>
            <person name="Zaha A."/>
        </authorList>
    </citation>
    <scope>NUCLEOTIDE SEQUENCE [LARGE SCALE GENOMIC DNA]</scope>
    <source>
        <strain>J / ATCC 25934 / NCTC 10110</strain>
    </source>
</reference>
<comment type="function">
    <text evidence="1">This protein binds to 23S rRNA in the presence of protein L20.</text>
</comment>
<comment type="subunit">
    <text evidence="1">Part of the 50S ribosomal subunit. Contacts protein L20.</text>
</comment>
<comment type="similarity">
    <text evidence="1">Belongs to the bacterial ribosomal protein bL21 family.</text>
</comment>